<organism>
    <name type="scientific">Neosartorya fischeri (strain ATCC 1020 / DSM 3700 / CBS 544.65 / FGSC A1164 / JCM 1740 / NRRL 181 / WB 181)</name>
    <name type="common">Aspergillus fischerianus</name>
    <dbReference type="NCBI Taxonomy" id="331117"/>
    <lineage>
        <taxon>Eukaryota</taxon>
        <taxon>Fungi</taxon>
        <taxon>Dikarya</taxon>
        <taxon>Ascomycota</taxon>
        <taxon>Pezizomycotina</taxon>
        <taxon>Eurotiomycetes</taxon>
        <taxon>Eurotiomycetidae</taxon>
        <taxon>Eurotiales</taxon>
        <taxon>Aspergillaceae</taxon>
        <taxon>Aspergillus</taxon>
        <taxon>Aspergillus subgen. Fumigati</taxon>
    </lineage>
</organism>
<keyword id="KW-0031">Aminopeptidase</keyword>
<keyword id="KW-0963">Cytoplasm</keyword>
<keyword id="KW-0378">Hydrolase</keyword>
<keyword id="KW-0479">Metal-binding</keyword>
<keyword id="KW-0645">Protease</keyword>
<keyword id="KW-1185">Reference proteome</keyword>
<sequence>MTIDAPELLEKLKISDADANGADIPGSTSAAANGMLKEDDDSDDDVAENTPAVAAENGTAKKKKNKKRKPKKKQPKVQTDPPSIPLSQLFPNNTYPKGEEVEYKDENRYRTTSEEKRHLDNLNSDFLSDYRQAAEAHRQVRQWAQRNIKPGQTLLEIANGIEDSARRLVGHDGLTEGDSLIAGMGFPTGLNIDNIVAHYSPNAGCKTVLAQNNVLKVDIGIHVGGRIVDSAFTMAFDPMYDNLLAAVKDATNTGVREAGIDVRVGELGGYIQEAMESYECEINGKTHPIKAIRNLCGHTILPYSIHGTKSVPFIKSNDMTKMEEGDVFAIETFGSTGSGRYVEGGEVSHYALRGDANRKDLTLSSARSLLTAIKKNFSTIPFCRRYLDRIGQEKYLLGLNYLVKSGIVEDYPPLNEKQGTYTAQFEHTILLRPTVKEVISRGDDY</sequence>
<accession>A1DA84</accession>
<proteinExistence type="inferred from homology"/>
<name>MAP23_NEOFI</name>
<dbReference type="EC" id="3.4.11.18" evidence="1"/>
<dbReference type="EMBL" id="DS027694">
    <property type="protein sequence ID" value="EAW19774.1"/>
    <property type="molecule type" value="Genomic_DNA"/>
</dbReference>
<dbReference type="RefSeq" id="XP_001261671.1">
    <property type="nucleotide sequence ID" value="XM_001261670.1"/>
</dbReference>
<dbReference type="SMR" id="A1DA84"/>
<dbReference type="STRING" id="331117.A1DA84"/>
<dbReference type="MEROPS" id="M24.002"/>
<dbReference type="EnsemblFungi" id="EAW19774">
    <property type="protein sequence ID" value="EAW19774"/>
    <property type="gene ID" value="NFIA_093940"/>
</dbReference>
<dbReference type="GeneID" id="4588868"/>
<dbReference type="KEGG" id="nfi:NFIA_093940"/>
<dbReference type="VEuPathDB" id="FungiDB:NFIA_093940"/>
<dbReference type="eggNOG" id="KOG2775">
    <property type="taxonomic scope" value="Eukaryota"/>
</dbReference>
<dbReference type="HOGENOM" id="CLU_015857_7_1_1"/>
<dbReference type="OMA" id="GNGWVYD"/>
<dbReference type="OrthoDB" id="7848262at2759"/>
<dbReference type="Proteomes" id="UP000006702">
    <property type="component" value="Unassembled WGS sequence"/>
</dbReference>
<dbReference type="GO" id="GO:0005737">
    <property type="term" value="C:cytoplasm"/>
    <property type="evidence" value="ECO:0007669"/>
    <property type="project" value="UniProtKB-SubCell"/>
</dbReference>
<dbReference type="GO" id="GO:0004239">
    <property type="term" value="F:initiator methionyl aminopeptidase activity"/>
    <property type="evidence" value="ECO:0007669"/>
    <property type="project" value="UniProtKB-UniRule"/>
</dbReference>
<dbReference type="GO" id="GO:0046872">
    <property type="term" value="F:metal ion binding"/>
    <property type="evidence" value="ECO:0007669"/>
    <property type="project" value="UniProtKB-UniRule"/>
</dbReference>
<dbReference type="GO" id="GO:0070006">
    <property type="term" value="F:metalloaminopeptidase activity"/>
    <property type="evidence" value="ECO:0007669"/>
    <property type="project" value="UniProtKB-UniRule"/>
</dbReference>
<dbReference type="GO" id="GO:0006508">
    <property type="term" value="P:proteolysis"/>
    <property type="evidence" value="ECO:0007669"/>
    <property type="project" value="UniProtKB-KW"/>
</dbReference>
<dbReference type="CDD" id="cd01088">
    <property type="entry name" value="MetAP2"/>
    <property type="match status" value="1"/>
</dbReference>
<dbReference type="Gene3D" id="3.90.230.10">
    <property type="entry name" value="Creatinase/methionine aminopeptidase superfamily"/>
    <property type="match status" value="1"/>
</dbReference>
<dbReference type="Gene3D" id="1.10.10.10">
    <property type="entry name" value="Winged helix-like DNA-binding domain superfamily/Winged helix DNA-binding domain"/>
    <property type="match status" value="1"/>
</dbReference>
<dbReference type="HAMAP" id="MF_03175">
    <property type="entry name" value="MetAP_2_euk"/>
    <property type="match status" value="1"/>
</dbReference>
<dbReference type="InterPro" id="IPR036005">
    <property type="entry name" value="Creatinase/aminopeptidase-like"/>
</dbReference>
<dbReference type="InterPro" id="IPR050247">
    <property type="entry name" value="Met_Aminopeptidase_Type2"/>
</dbReference>
<dbReference type="InterPro" id="IPR000994">
    <property type="entry name" value="Pept_M24"/>
</dbReference>
<dbReference type="InterPro" id="IPR001714">
    <property type="entry name" value="Pept_M24_MAP"/>
</dbReference>
<dbReference type="InterPro" id="IPR002468">
    <property type="entry name" value="Pept_M24A_MAP2"/>
</dbReference>
<dbReference type="InterPro" id="IPR036388">
    <property type="entry name" value="WH-like_DNA-bd_sf"/>
</dbReference>
<dbReference type="InterPro" id="IPR036390">
    <property type="entry name" value="WH_DNA-bd_sf"/>
</dbReference>
<dbReference type="NCBIfam" id="TIGR00501">
    <property type="entry name" value="met_pdase_II"/>
    <property type="match status" value="1"/>
</dbReference>
<dbReference type="PANTHER" id="PTHR45777">
    <property type="entry name" value="METHIONINE AMINOPEPTIDASE 2"/>
    <property type="match status" value="1"/>
</dbReference>
<dbReference type="PANTHER" id="PTHR45777:SF2">
    <property type="entry name" value="METHIONINE AMINOPEPTIDASE 2"/>
    <property type="match status" value="1"/>
</dbReference>
<dbReference type="Pfam" id="PF00557">
    <property type="entry name" value="Peptidase_M24"/>
    <property type="match status" value="1"/>
</dbReference>
<dbReference type="PRINTS" id="PR00599">
    <property type="entry name" value="MAPEPTIDASE"/>
</dbReference>
<dbReference type="SUPFAM" id="SSF55920">
    <property type="entry name" value="Creatinase/aminopeptidase"/>
    <property type="match status" value="1"/>
</dbReference>
<dbReference type="SUPFAM" id="SSF46785">
    <property type="entry name" value="Winged helix' DNA-binding domain"/>
    <property type="match status" value="1"/>
</dbReference>
<comment type="function">
    <text evidence="1">Cotranslationally removes the N-terminal methionine from nascent proteins. The N-terminal methionine is often cleaved when the second residue in the primary sequence is small and uncharged (Met-Ala-, Cys, Gly, Pro, Ser, Thr, or Val).</text>
</comment>
<comment type="catalytic activity">
    <reaction evidence="1">
        <text>Release of N-terminal amino acids, preferentially methionine, from peptides and arylamides.</text>
        <dbReference type="EC" id="3.4.11.18"/>
    </reaction>
</comment>
<comment type="cofactor">
    <cofactor evidence="1">
        <name>Co(2+)</name>
        <dbReference type="ChEBI" id="CHEBI:48828"/>
    </cofactor>
    <cofactor evidence="1">
        <name>Zn(2+)</name>
        <dbReference type="ChEBI" id="CHEBI:29105"/>
    </cofactor>
    <cofactor evidence="1">
        <name>Mn(2+)</name>
        <dbReference type="ChEBI" id="CHEBI:29035"/>
    </cofactor>
    <cofactor evidence="1">
        <name>Fe(2+)</name>
        <dbReference type="ChEBI" id="CHEBI:29033"/>
    </cofactor>
    <text evidence="1">Binds 2 divalent metal cations per subunit. Has a high-affinity and a low affinity metal-binding site. The true nature of the physiological cofactor is under debate. The enzyme is active with cobalt, zinc, manganese or divalent iron ions. Most likely, methionine aminopeptidases function as mononuclear Fe(2+)-metalloproteases under physiological conditions, and the catalytically relevant metal-binding site has been assigned to the histidine-containing high-affinity site.</text>
</comment>
<comment type="subcellular location">
    <subcellularLocation>
        <location evidence="1">Cytoplasm</location>
    </subcellularLocation>
</comment>
<comment type="similarity">
    <text evidence="1">Belongs to the peptidase M24A family. Methionine aminopeptidase eukaryotic type 2 subfamily.</text>
</comment>
<reference key="1">
    <citation type="journal article" date="2008" name="PLoS Genet.">
        <title>Genomic islands in the pathogenic filamentous fungus Aspergillus fumigatus.</title>
        <authorList>
            <person name="Fedorova N.D."/>
            <person name="Khaldi N."/>
            <person name="Joardar V.S."/>
            <person name="Maiti R."/>
            <person name="Amedeo P."/>
            <person name="Anderson M.J."/>
            <person name="Crabtree J."/>
            <person name="Silva J.C."/>
            <person name="Badger J.H."/>
            <person name="Albarraq A."/>
            <person name="Angiuoli S."/>
            <person name="Bussey H."/>
            <person name="Bowyer P."/>
            <person name="Cotty P.J."/>
            <person name="Dyer P.S."/>
            <person name="Egan A."/>
            <person name="Galens K."/>
            <person name="Fraser-Liggett C.M."/>
            <person name="Haas B.J."/>
            <person name="Inman J.M."/>
            <person name="Kent R."/>
            <person name="Lemieux S."/>
            <person name="Malavazi I."/>
            <person name="Orvis J."/>
            <person name="Roemer T."/>
            <person name="Ronning C.M."/>
            <person name="Sundaram J.P."/>
            <person name="Sutton G."/>
            <person name="Turner G."/>
            <person name="Venter J.C."/>
            <person name="White O.R."/>
            <person name="Whitty B.R."/>
            <person name="Youngman P."/>
            <person name="Wolfe K.H."/>
            <person name="Goldman G.H."/>
            <person name="Wortman J.R."/>
            <person name="Jiang B."/>
            <person name="Denning D.W."/>
            <person name="Nierman W.C."/>
        </authorList>
    </citation>
    <scope>NUCLEOTIDE SEQUENCE [LARGE SCALE GENOMIC DNA]</scope>
    <source>
        <strain>ATCC 1020 / DSM 3700 / CBS 544.65 / FGSC A1164 / JCM 1740 / NRRL 181 / WB 181</strain>
    </source>
</reference>
<protein>
    <recommendedName>
        <fullName evidence="1">Methionine aminopeptidase 2-3</fullName>
        <shortName evidence="1">MAP 2-3</shortName>
        <shortName evidence="1">MetAP 2-3</shortName>
        <ecNumber evidence="1">3.4.11.18</ecNumber>
    </recommendedName>
    <alternativeName>
        <fullName evidence="1">Peptidase M</fullName>
    </alternativeName>
</protein>
<gene>
    <name type="ORF">NFIA_093940</name>
</gene>
<evidence type="ECO:0000255" key="1">
    <source>
        <dbReference type="HAMAP-Rule" id="MF_03175"/>
    </source>
</evidence>
<evidence type="ECO:0000256" key="2">
    <source>
        <dbReference type="SAM" id="MobiDB-lite"/>
    </source>
</evidence>
<feature type="chain" id="PRO_0000407609" description="Methionine aminopeptidase 2-3">
    <location>
        <begin position="1"/>
        <end position="445"/>
    </location>
</feature>
<feature type="region of interest" description="Disordered" evidence="2">
    <location>
        <begin position="14"/>
        <end position="115"/>
    </location>
</feature>
<feature type="compositionally biased region" description="Acidic residues" evidence="2">
    <location>
        <begin position="38"/>
        <end position="47"/>
    </location>
</feature>
<feature type="compositionally biased region" description="Basic residues" evidence="2">
    <location>
        <begin position="60"/>
        <end position="75"/>
    </location>
</feature>
<feature type="compositionally biased region" description="Polar residues" evidence="2">
    <location>
        <begin position="85"/>
        <end position="95"/>
    </location>
</feature>
<feature type="compositionally biased region" description="Basic and acidic residues" evidence="2">
    <location>
        <begin position="97"/>
        <end position="115"/>
    </location>
</feature>
<feature type="binding site" evidence="1">
    <location>
        <position position="198"/>
    </location>
    <ligand>
        <name>substrate</name>
    </ligand>
</feature>
<feature type="binding site" evidence="1">
    <location>
        <position position="218"/>
    </location>
    <ligand>
        <name>a divalent metal cation</name>
        <dbReference type="ChEBI" id="CHEBI:60240"/>
        <label>1</label>
    </ligand>
</feature>
<feature type="binding site" evidence="1">
    <location>
        <position position="229"/>
    </location>
    <ligand>
        <name>a divalent metal cation</name>
        <dbReference type="ChEBI" id="CHEBI:60240"/>
        <label>1</label>
    </ligand>
</feature>
<feature type="binding site" evidence="1">
    <location>
        <position position="229"/>
    </location>
    <ligand>
        <name>a divalent metal cation</name>
        <dbReference type="ChEBI" id="CHEBI:60240"/>
        <label>2</label>
        <note>catalytic</note>
    </ligand>
</feature>
<feature type="binding site" evidence="1">
    <location>
        <position position="298"/>
    </location>
    <ligand>
        <name>a divalent metal cation</name>
        <dbReference type="ChEBI" id="CHEBI:60240"/>
        <label>2</label>
        <note>catalytic</note>
    </ligand>
</feature>
<feature type="binding site" evidence="1">
    <location>
        <position position="306"/>
    </location>
    <ligand>
        <name>substrate</name>
    </ligand>
</feature>
<feature type="binding site" evidence="1">
    <location>
        <position position="331"/>
    </location>
    <ligand>
        <name>a divalent metal cation</name>
        <dbReference type="ChEBI" id="CHEBI:60240"/>
        <label>2</label>
        <note>catalytic</note>
    </ligand>
</feature>
<feature type="binding site" evidence="1">
    <location>
        <position position="426"/>
    </location>
    <ligand>
        <name>a divalent metal cation</name>
        <dbReference type="ChEBI" id="CHEBI:60240"/>
        <label>1</label>
    </ligand>
</feature>
<feature type="binding site" evidence="1">
    <location>
        <position position="426"/>
    </location>
    <ligand>
        <name>a divalent metal cation</name>
        <dbReference type="ChEBI" id="CHEBI:60240"/>
        <label>2</label>
        <note>catalytic</note>
    </ligand>
</feature>